<comment type="function">
    <text evidence="1 6">Microtubule-binding protein essential for faithful chromosome segregation. Mediates TRF1 and TERT accumulation in nucleolus and enhances TRF1 binding to telomeres. Inhibits telomerase activity. May inhibit cell proliferation and act as tumor suppressor (By similarity).</text>
</comment>
<comment type="subunit">
    <text evidence="1">Interacts with MCRS1, TERT, TERF1, NCL/nucleolin, and the telomerase RNA.</text>
</comment>
<comment type="subcellular location">
    <subcellularLocation>
        <location evidence="2">Nucleus</location>
    </subcellularLocation>
    <subcellularLocation>
        <location evidence="6">Nucleus</location>
        <location evidence="6">Nucleolus</location>
    </subcellularLocation>
    <subcellularLocation>
        <location evidence="1">Chromosome</location>
        <location evidence="1">Telomere</location>
    </subcellularLocation>
    <subcellularLocation>
        <location evidence="1">Chromosome</location>
        <location evidence="1">Centromere</location>
        <location evidence="1">Kinetochore</location>
    </subcellularLocation>
    <text evidence="1">Localizes in nucleoli, at telomere speckles and to the outer plate of kinetochores. Localization to the kinetochore is mediated by its central region and depends on NDC80 and CENPE (By similarity).</text>
</comment>
<comment type="domain">
    <text evidence="2">The TID (telomerase inhibiting domain) domain is sufficient to bind TERT and inhibits its activity.</text>
</comment>
<comment type="domain">
    <text evidence="1">The TBM domain mediates interaction with TERF1.</text>
</comment>
<comment type="similarity">
    <text evidence="7">Belongs to the PINX1 family.</text>
</comment>
<gene>
    <name evidence="8" type="primary">Pinx1</name>
</gene>
<evidence type="ECO:0000250" key="1"/>
<evidence type="ECO:0000250" key="2">
    <source>
        <dbReference type="UniProtKB" id="Q96BK5"/>
    </source>
</evidence>
<evidence type="ECO:0000250" key="3">
    <source>
        <dbReference type="UniProtKB" id="Q9CZX5"/>
    </source>
</evidence>
<evidence type="ECO:0000255" key="4">
    <source>
        <dbReference type="PROSITE-ProRule" id="PRU00092"/>
    </source>
</evidence>
<evidence type="ECO:0000256" key="5">
    <source>
        <dbReference type="SAM" id="MobiDB-lite"/>
    </source>
</evidence>
<evidence type="ECO:0000269" key="6">
    <source>
    </source>
</evidence>
<evidence type="ECO:0000305" key="7"/>
<evidence type="ECO:0000312" key="8">
    <source>
        <dbReference type="EMBL" id="ABO28828.1"/>
    </source>
</evidence>
<evidence type="ECO:0007744" key="9">
    <source>
    </source>
</evidence>
<keyword id="KW-0137">Centromere</keyword>
<keyword id="KW-0158">Chromosome</keyword>
<keyword id="KW-0995">Kinetochore</keyword>
<keyword id="KW-0539">Nucleus</keyword>
<keyword id="KW-0597">Phosphoprotein</keyword>
<keyword id="KW-1185">Reference proteome</keyword>
<keyword id="KW-0779">Telomere</keyword>
<keyword id="KW-0043">Tumor suppressor</keyword>
<reference key="1">
    <citation type="journal article" date="2007" name="Gene">
        <title>Rat homolog of PinX1 is a nucleolar protein involved in the regulation of telomere length.</title>
        <authorList>
            <person name="Oh B.K."/>
            <person name="Yoon S.M."/>
            <person name="Lee C.H."/>
            <person name="Park Y.N."/>
        </authorList>
    </citation>
    <scope>NUCLEOTIDE SEQUENCE [MRNA]</scope>
    <scope>SUBCELLULAR LOCATION</scope>
    <scope>FUNCTION</scope>
    <source>
        <strain>Fischer 344</strain>
    </source>
</reference>
<reference key="2">
    <citation type="journal article" date="2012" name="Nat. Commun.">
        <title>Quantitative maps of protein phosphorylation sites across 14 different rat organs and tissues.</title>
        <authorList>
            <person name="Lundby A."/>
            <person name="Secher A."/>
            <person name="Lage K."/>
            <person name="Nordsborg N.B."/>
            <person name="Dmytriyev A."/>
            <person name="Lundby C."/>
            <person name="Olsen J.V."/>
        </authorList>
    </citation>
    <scope>PHOSPHORYLATION [LARGE SCALE ANALYSIS] AT SER-233</scope>
    <scope>IDENTIFICATION BY MASS SPECTROMETRY [LARGE SCALE ANALYSIS]</scope>
</reference>
<accession>A4L691</accession>
<organism>
    <name type="scientific">Rattus norvegicus</name>
    <name type="common">Rat</name>
    <dbReference type="NCBI Taxonomy" id="10116"/>
    <lineage>
        <taxon>Eukaryota</taxon>
        <taxon>Metazoa</taxon>
        <taxon>Chordata</taxon>
        <taxon>Craniata</taxon>
        <taxon>Vertebrata</taxon>
        <taxon>Euteleostomi</taxon>
        <taxon>Mammalia</taxon>
        <taxon>Eutheria</taxon>
        <taxon>Euarchontoglires</taxon>
        <taxon>Glires</taxon>
        <taxon>Rodentia</taxon>
        <taxon>Myomorpha</taxon>
        <taxon>Muroidea</taxon>
        <taxon>Muridae</taxon>
        <taxon>Murinae</taxon>
        <taxon>Rattus</taxon>
    </lineage>
</organism>
<protein>
    <recommendedName>
        <fullName>PIN2/TERF1-interacting telomerase inhibitor 1</fullName>
    </recommendedName>
    <alternativeName>
        <fullName>Pin2-interacting protein X1</fullName>
    </alternativeName>
</protein>
<dbReference type="EMBL" id="EF446165">
    <property type="protein sequence ID" value="ABO28828.1"/>
    <property type="molecule type" value="mRNA"/>
</dbReference>
<dbReference type="RefSeq" id="NP_001076806.1">
    <property type="nucleotide sequence ID" value="NM_001083337.2"/>
</dbReference>
<dbReference type="FunCoup" id="A4L691">
    <property type="interactions" value="2378"/>
</dbReference>
<dbReference type="STRING" id="10116.ENSRNOP00000016027"/>
<dbReference type="iPTMnet" id="A4L691"/>
<dbReference type="PhosphoSitePlus" id="A4L691"/>
<dbReference type="PaxDb" id="10116-ENSRNOP00000016027"/>
<dbReference type="PeptideAtlas" id="A4L691"/>
<dbReference type="Ensembl" id="ENSRNOT00000016027.6">
    <property type="protein sequence ID" value="ENSRNOP00000016027.4"/>
    <property type="gene ID" value="ENSRNOG00000012012.6"/>
</dbReference>
<dbReference type="GeneID" id="305963"/>
<dbReference type="KEGG" id="rno:305963"/>
<dbReference type="UCSC" id="RGD:1566025">
    <property type="organism name" value="rat"/>
</dbReference>
<dbReference type="AGR" id="RGD:1566025"/>
<dbReference type="CTD" id="54984"/>
<dbReference type="RGD" id="1566025">
    <property type="gene designation" value="Pinx1"/>
</dbReference>
<dbReference type="eggNOG" id="KOG2809">
    <property type="taxonomic scope" value="Eukaryota"/>
</dbReference>
<dbReference type="GeneTree" id="ENSGT00450000040279"/>
<dbReference type="HOGENOM" id="CLU_047471_0_0_1"/>
<dbReference type="InParanoid" id="A4L691"/>
<dbReference type="OrthoDB" id="29523at2759"/>
<dbReference type="PhylomeDB" id="A4L691"/>
<dbReference type="TreeFam" id="TF321918"/>
<dbReference type="PRO" id="PR:A4L691"/>
<dbReference type="Proteomes" id="UP000002494">
    <property type="component" value="Chromosome 15"/>
</dbReference>
<dbReference type="Bgee" id="ENSRNOG00000012012">
    <property type="expression patterns" value="Expressed in ovary and 19 other cell types or tissues"/>
</dbReference>
<dbReference type="ExpressionAtlas" id="A4L691">
    <property type="expression patterns" value="baseline and differential"/>
</dbReference>
<dbReference type="GO" id="GO:0000781">
    <property type="term" value="C:chromosome, telomeric region"/>
    <property type="evidence" value="ECO:0000266"/>
    <property type="project" value="RGD"/>
</dbReference>
<dbReference type="GO" id="GO:0000776">
    <property type="term" value="C:kinetochore"/>
    <property type="evidence" value="ECO:0000266"/>
    <property type="project" value="RGD"/>
</dbReference>
<dbReference type="GO" id="GO:0000228">
    <property type="term" value="C:nuclear chromosome"/>
    <property type="evidence" value="ECO:0000266"/>
    <property type="project" value="RGD"/>
</dbReference>
<dbReference type="GO" id="GO:0005730">
    <property type="term" value="C:nucleolus"/>
    <property type="evidence" value="ECO:0000266"/>
    <property type="project" value="RGD"/>
</dbReference>
<dbReference type="GO" id="GO:0005819">
    <property type="term" value="C:spindle"/>
    <property type="evidence" value="ECO:0000266"/>
    <property type="project" value="RGD"/>
</dbReference>
<dbReference type="GO" id="GO:0044877">
    <property type="term" value="F:protein-containing complex binding"/>
    <property type="evidence" value="ECO:0000266"/>
    <property type="project" value="RGD"/>
</dbReference>
<dbReference type="GO" id="GO:0010521">
    <property type="term" value="F:telomerase inhibitor activity"/>
    <property type="evidence" value="ECO:0000266"/>
    <property type="project" value="RGD"/>
</dbReference>
<dbReference type="GO" id="GO:0070034">
    <property type="term" value="F:telomerase RNA binding"/>
    <property type="evidence" value="ECO:0000266"/>
    <property type="project" value="RGD"/>
</dbReference>
<dbReference type="GO" id="GO:0007080">
    <property type="term" value="P:mitotic metaphase chromosome alignment"/>
    <property type="evidence" value="ECO:0000266"/>
    <property type="project" value="RGD"/>
</dbReference>
<dbReference type="GO" id="GO:0010972">
    <property type="term" value="P:negative regulation of G2/M transition of mitotic cell cycle"/>
    <property type="evidence" value="ECO:0000266"/>
    <property type="project" value="RGD"/>
</dbReference>
<dbReference type="GO" id="GO:0031397">
    <property type="term" value="P:negative regulation of protein ubiquitination"/>
    <property type="evidence" value="ECO:0000266"/>
    <property type="project" value="RGD"/>
</dbReference>
<dbReference type="GO" id="GO:0032211">
    <property type="term" value="P:negative regulation of telomere maintenance via telomerase"/>
    <property type="evidence" value="ECO:0000266"/>
    <property type="project" value="RGD"/>
</dbReference>
<dbReference type="GO" id="GO:1904751">
    <property type="term" value="P:positive regulation of protein localization to nucleolus"/>
    <property type="evidence" value="ECO:0000266"/>
    <property type="project" value="RGD"/>
</dbReference>
<dbReference type="GO" id="GO:0070198">
    <property type="term" value="P:protein localization to chromosome, telomeric region"/>
    <property type="evidence" value="ECO:0000266"/>
    <property type="project" value="RGD"/>
</dbReference>
<dbReference type="GO" id="GO:1902570">
    <property type="term" value="P:protein localization to nucleolus"/>
    <property type="evidence" value="ECO:0000266"/>
    <property type="project" value="RGD"/>
</dbReference>
<dbReference type="GO" id="GO:0031647">
    <property type="term" value="P:regulation of protein stability"/>
    <property type="evidence" value="ECO:0000266"/>
    <property type="project" value="RGD"/>
</dbReference>
<dbReference type="GO" id="GO:0007004">
    <property type="term" value="P:telomere maintenance via telomerase"/>
    <property type="evidence" value="ECO:0000266"/>
    <property type="project" value="RGD"/>
</dbReference>
<dbReference type="InterPro" id="IPR000467">
    <property type="entry name" value="G_patch_dom"/>
</dbReference>
<dbReference type="InterPro" id="IPR050656">
    <property type="entry name" value="PINX1"/>
</dbReference>
<dbReference type="PANTHER" id="PTHR23149">
    <property type="entry name" value="G PATCH DOMAIN CONTAINING PROTEIN"/>
    <property type="match status" value="1"/>
</dbReference>
<dbReference type="PANTHER" id="PTHR23149:SF27">
    <property type="entry name" value="PIN2_TERF1-INTERACTING TELOMERASE INHIBITOR 1"/>
    <property type="match status" value="1"/>
</dbReference>
<dbReference type="Pfam" id="PF01585">
    <property type="entry name" value="G-patch"/>
    <property type="match status" value="1"/>
</dbReference>
<dbReference type="SMART" id="SM00443">
    <property type="entry name" value="G_patch"/>
    <property type="match status" value="1"/>
</dbReference>
<dbReference type="PROSITE" id="PS50174">
    <property type="entry name" value="G_PATCH"/>
    <property type="match status" value="1"/>
</dbReference>
<proteinExistence type="evidence at protein level"/>
<sequence length="331" mass="36710">MSMLAERRRKQKWAVDPRNTAWSNDDSKFGQKMLEKMGWSKGKGLGAQEQGATEHIKVKVKNNHLGLGATNNNEDNWIAHQDDFNQLLAALNTCHGQETADSSDNKEKKSFSLEEKSKISKNRVHYMKFTKGKDLSSRSETDLDCIFGKRRNKKLAQDGCSNSTADEADTSLTTTTTTTSAFTIQEYFAKRMAQLKSKSQAAAPGSDLSETPIEWKKGKKKTKEAAGTDIENSPQHKAKRHKKKKRVEAERGPAAKKRDQVELQPGGPSGDECSDASVEAAEDRVQTPDTQDDVPKPRKRRAKKTLQRPGGVAVDTAPDSAPVKKKKKVSR</sequence>
<feature type="chain" id="PRO_0000294933" description="PIN2/TERF1-interacting telomerase inhibitor 1">
    <location>
        <begin position="1"/>
        <end position="331"/>
    </location>
</feature>
<feature type="domain" description="G-patch" evidence="4">
    <location>
        <begin position="26"/>
        <end position="72"/>
    </location>
</feature>
<feature type="region of interest" description="Disordered" evidence="5">
    <location>
        <begin position="1"/>
        <end position="28"/>
    </location>
</feature>
<feature type="region of interest" description="Disordered" evidence="5">
    <location>
        <begin position="156"/>
        <end position="175"/>
    </location>
</feature>
<feature type="region of interest" description="Disordered" evidence="5">
    <location>
        <begin position="197"/>
        <end position="331"/>
    </location>
</feature>
<feature type="region of interest" description="Telomerase inhibitory domain (TID)" evidence="2">
    <location>
        <begin position="254"/>
        <end position="328"/>
    </location>
</feature>
<feature type="short sequence motif" description="TBM">
    <location>
        <begin position="291"/>
        <end position="301"/>
    </location>
</feature>
<feature type="compositionally biased region" description="Basic residues" evidence="5">
    <location>
        <begin position="236"/>
        <end position="246"/>
    </location>
</feature>
<feature type="compositionally biased region" description="Basic and acidic residues" evidence="5">
    <location>
        <begin position="247"/>
        <end position="261"/>
    </location>
</feature>
<feature type="compositionally biased region" description="Basic residues" evidence="5">
    <location>
        <begin position="297"/>
        <end position="306"/>
    </location>
</feature>
<feature type="modified residue" description="Phosphoserine" evidence="9">
    <location>
        <position position="233"/>
    </location>
</feature>
<feature type="modified residue" description="Phosphoserine" evidence="3">
    <location>
        <position position="269"/>
    </location>
</feature>
<feature type="modified residue" description="Phosphoserine" evidence="3">
    <location>
        <position position="274"/>
    </location>
</feature>
<feature type="modified residue" description="Phosphoserine" evidence="3">
    <location>
        <position position="277"/>
    </location>
</feature>
<name>PINX1_RAT</name>